<name>NU214_HUMAN</name>
<sequence>MGDEMDAMIPEREMKDFQFRALKKVRIFDSPEELPKERSSLLAVSNKYGLVFAGGASGLQIFPTKNLLIQNKPGDDPNKIVDKVQGLLVPMKFPIHHLALSCDNLTLSACMMSSEYGSIIAFFDVRTFSNEAKQQKRPFAYHKLLKDAGGMVIDMKWNPTVPSMVAVCLADGSIAVLQVTETVKVCATLPSTVAVTSVCWSPKGKQLAVGKQNGTVVQYLPTLQEKKVIPCPPFYESDHPVRVLDVLWIGTYVFAIVYAAADGTLETSPDVVMALLPKKEEKHPEIFVNFMEPCYGSCTERQHHYYLSYIEEWDLVLAASAASTEVSILARQSDQINWESWLLEDSSRAELPVTDKSDDSLPMGVVVDYTNQVEITISDEKTLPPAPVLMLLSTDGVLCPFYMINQNPGVKSLIKTPERLSLEGERQPKSPGSTPTTPTSSQAPQKLDASAAAAPASLPPSSPAAPIATFSLLPAGGAPTVFSFGSSSLKSSATVTGEPPSYSSGSDSSKAAPGPGPSTFSFVPPSKASLAPTPAASPVAPSAASFSFGSSGFKPTLESTPVPSVSAPNIAMKPSFPPSTSAVKVNLSEKFTAAATSTPVSSSQSAPPMSPFSSASKPAASGPLSHPTPLSAPPSSVPLKSSVLPSPSGRSAQGSSSPVPSMVQKSPRITPPAAKPGSPQAKSLQPAVAEKQGHQWKDSDPVMAGIGEEIAHFQKELEELKARTSKACFQVGTSEEMKMLRTESDDLHTFLLEIKETTESLHGDISSLKTTLLEGFAGVEEAREQNERNRDSGYLHLLYKRPLDPKSEAQLQEIRRLHQYVKFAVQDVNDVLDLEWDQHLEQKKKQRHLLVPERETLFNTLANNREIINQQRKRLNHLVDSLQQLRLYKQTSLWSLSSAVPSQSSIHSFDSDLESLCNALLKTTIESHTKSLPKVPAKLSPMKQAQLRNFLAKRKTPPVRSTAPASLSRSAFLSQRYYEDLDEVSSTSSVSQSLESEDARTSCKDDEAVVQAPRHAPVVRTPSIQPSLLPHAAPFAKSHLVHGSSPGVMGTSVATSASKIIPQGADSTMLATKTVKHGAPSPSHPISAPQAAAAAALRRQMASQAPAVNTLTESTLKNVPQVVNVQELKNNPATPSTAMGSSVPYSTAKTPHPVLTPVAANQAKQGSLINSLKPSGPTPASGQLSSGDKASGTAKIETAVTSTPSASGQFSKPFSFSPSGTGFNFGIITPTPSSNFTAAQGATPSTKESSQPDAFSSGGGSKPSYEAIPESSPPSGITSASNTTPGEPAASSSRPVAPSGTALSTTSSKLETPPSKLGELLFPSSLAGETLGSFSGLRVGQADDSTKPTNKASSTSLTSTQPTKTSGVPSGFNFTAPPVLGKHTEPPVTSSATTTSVAPPAATSTSSTAVFGSLPVTSAGSSGVISFGGTSLSAGKTSFSFGSQQTNSTVPPSAPPPTTAATPLPTSFPTLSFGSLLSSATTPSLPMSAGRSTEEATSSALPEKPGDSEVSASAASLLEEQQSAQLPQAPPQTSDSVKKEPVLAQPAVSNSGTAASSTSLVALSAEATPATTGVPDARTEAVPPASSFSVPGQTAVTAAAISSAGPVAVETSSTPIASSTTSIVAPGPSAEAAAFGTVTSGSSVFAQPPAASSSSAFNQLTNNTATAPSATPVFGQVAASTAPSLFGQQTGSTASTAAATPQVSSSGFSSPAFGTTAPGVFGQTTFGQASVFGQSASSAASVFSFSQPGFSSVPAFGQPASSTPTSTSGSVFGAASSTSSSSSFSFGQSSPNTGGGLFGQSNAPAFGQSPGFGQGGSVFGGTSAATTTAATSGFSFCQASGFGSSNTGSVFGQAASTGGIVFGQQSSSSSGSVFGSGNTGRGGGFFSGLGGKPSQDAANKNPFSSASGGFGSTATSNTSNLFGNSGAKTFGGFASSSFGEQKPTGTFSSGGGSVASQGFGFSSPNKTGGFGAAPVFGSPPTFGGSPGFGGVPAFGSAPAFTSPLGSTGGKVFGEGTAAASAGGFGFGSSSNTTSFGTLASQNAPTFGSLSQQTSGFGTQSSGFSGFGSGTGGFSFGSNNSSVQGFGGWRS</sequence>
<organism>
    <name type="scientific">Homo sapiens</name>
    <name type="common">Human</name>
    <dbReference type="NCBI Taxonomy" id="9606"/>
    <lineage>
        <taxon>Eukaryota</taxon>
        <taxon>Metazoa</taxon>
        <taxon>Chordata</taxon>
        <taxon>Craniata</taxon>
        <taxon>Vertebrata</taxon>
        <taxon>Euteleostomi</taxon>
        <taxon>Mammalia</taxon>
        <taxon>Eutheria</taxon>
        <taxon>Euarchontoglires</taxon>
        <taxon>Primates</taxon>
        <taxon>Haplorrhini</taxon>
        <taxon>Catarrhini</taxon>
        <taxon>Hominidae</taxon>
        <taxon>Homo</taxon>
    </lineage>
</organism>
<evidence type="ECO:0000256" key="1">
    <source>
        <dbReference type="SAM" id="MobiDB-lite"/>
    </source>
</evidence>
<evidence type="ECO:0000269" key="2">
    <source>
    </source>
</evidence>
<evidence type="ECO:0000269" key="3">
    <source>
    </source>
</evidence>
<evidence type="ECO:0000269" key="4">
    <source>
    </source>
</evidence>
<evidence type="ECO:0000269" key="5">
    <source>
    </source>
</evidence>
<evidence type="ECO:0000269" key="6">
    <source>
    </source>
</evidence>
<evidence type="ECO:0000269" key="7">
    <source>
    </source>
</evidence>
<evidence type="ECO:0000269" key="8">
    <source>
    </source>
</evidence>
<evidence type="ECO:0000269" key="9">
    <source>
    </source>
</evidence>
<evidence type="ECO:0000269" key="10">
    <source>
    </source>
</evidence>
<evidence type="ECO:0000269" key="11">
    <source>
    </source>
</evidence>
<evidence type="ECO:0000269" key="12">
    <source>
    </source>
</evidence>
<evidence type="ECO:0000269" key="13">
    <source>
    </source>
</evidence>
<evidence type="ECO:0000269" key="14">
    <source>
    </source>
</evidence>
<evidence type="ECO:0000269" key="15">
    <source>
    </source>
</evidence>
<evidence type="ECO:0000269" key="16">
    <source>
    </source>
</evidence>
<evidence type="ECO:0000269" key="17">
    <source>
    </source>
</evidence>
<evidence type="ECO:0000269" key="18">
    <source>
    </source>
</evidence>
<evidence type="ECO:0000303" key="19">
    <source>
    </source>
</evidence>
<evidence type="ECO:0000303" key="20">
    <source>
    </source>
</evidence>
<evidence type="ECO:0000303" key="21">
    <source>
    </source>
</evidence>
<evidence type="ECO:0000305" key="22"/>
<evidence type="ECO:0007744" key="23">
    <source>
    </source>
</evidence>
<evidence type="ECO:0007744" key="24">
    <source>
    </source>
</evidence>
<evidence type="ECO:0007744" key="25">
    <source>
    </source>
</evidence>
<evidence type="ECO:0007744" key="26">
    <source>
    </source>
</evidence>
<evidence type="ECO:0007744" key="27">
    <source>
    </source>
</evidence>
<evidence type="ECO:0007744" key="28">
    <source>
    </source>
</evidence>
<evidence type="ECO:0007744" key="29">
    <source>
    </source>
</evidence>
<evidence type="ECO:0007744" key="30">
    <source>
    </source>
</evidence>
<evidence type="ECO:0007744" key="31">
    <source>
    </source>
</evidence>
<evidence type="ECO:0007744" key="32">
    <source>
    </source>
</evidence>
<evidence type="ECO:0007829" key="33">
    <source>
        <dbReference type="PDB" id="2OIT"/>
    </source>
</evidence>
<evidence type="ECO:0007829" key="34">
    <source>
        <dbReference type="PDB" id="3FMO"/>
    </source>
</evidence>
<evidence type="ECO:0007829" key="35">
    <source>
        <dbReference type="PDB" id="3FMP"/>
    </source>
</evidence>
<evidence type="ECO:0007829" key="36">
    <source>
        <dbReference type="PDB" id="5DIS"/>
    </source>
</evidence>
<accession>P35658</accession>
<accession>A6NFQ0</accession>
<accession>Q15010</accession>
<accession>Q3KQZ0</accession>
<accession>Q5JUP7</accession>
<accession>Q75R47</accession>
<accession>Q86XD3</accession>
<comment type="function">
    <text evidence="16 18 21">Part of the nuclear pore complex (PubMed:9049309). Has a critical role in nucleocytoplasmic transport (PubMed:31178128). May serve as a docking site in the receptor-mediated import of substrates across the nuclear pore complex (PubMed:31178128, PubMed:8108440).</text>
</comment>
<comment type="function">
    <text evidence="13">(Microbial infection) Required for capsid disassembly of the human adenovirus 5 (HadV-5) leading to release of the viral genome to the nucleus (in vitro).</text>
</comment>
<comment type="subunit">
    <text evidence="2 3 9 10 14 18">Homodimer. Part of the nuclear pore complex (NPC) (PubMed:9049309). Interacts with NUP88 (PubMed:30543681, PubMed:9049309). Interacts with ZFP36; this interaction increases upon lipopolysaccharide (LPS) stimulation (PubMed:14766228). Interacts with DDX19 (PubMed:19208808, PubMed:19219046). Interacts with XPO1 (PubMed:9049309). Interacts with XPO5 (PubMed:11777942).</text>
</comment>
<comment type="subunit">
    <text evidence="11">(Microbial infection) Interacts with human herpes virus 1 (HHV-1) protein UL25; this interaction might be essential to the capsid docking onto the host nuclear pore.</text>
</comment>
<comment type="subunit">
    <text evidence="13">(Microbial infection) Interacts (via N-terminus) with human adenovirus 5 (HAdV-5) protein L3 (hexon); this interaction might be essential for the release of the virus genome to the nucleus.</text>
</comment>
<comment type="interaction">
    <interactant intactId="EBI-1222270">
        <id>P35658</id>
    </interactant>
    <interactant intactId="EBI-726178">
        <id>Q99567</id>
        <label>NUP88</label>
    </interactant>
    <organismsDiffer>false</organismsDiffer>
    <experiments>4</experiments>
</comment>
<comment type="interaction">
    <interactant intactId="EBI-15757000">
        <id>P35658-1</id>
    </interactant>
    <interactant intactId="EBI-5773937">
        <id>Q9UMR2-1</id>
        <label>DDX19B</label>
    </interactant>
    <organismsDiffer>false</organismsDiffer>
    <experiments>9</experiments>
</comment>
<comment type="subcellular location">
    <subcellularLocation>
        <location evidence="17">Nucleus</location>
        <location evidence="17">Nuclear pore complex</location>
    </subcellularLocation>
    <text evidence="17">Cytoplasmic side of the nuclear pore complex.</text>
</comment>
<comment type="alternative products">
    <event type="alternative splicing"/>
    <isoform>
        <id>P35658-1</id>
        <name>1</name>
        <sequence type="displayed"/>
    </isoform>
    <isoform>
        <id>P35658-2</id>
        <name>2</name>
        <sequence type="described" ref="VSP_034896"/>
    </isoform>
    <isoform>
        <id>P35658-3</id>
        <name>3</name>
        <sequence type="described" ref="VSP_034897"/>
    </isoform>
    <isoform>
        <id>P35658-4</id>
        <name>4</name>
        <sequence type="described" ref="VSP_034896 VSP_034897"/>
    </isoform>
    <isoform>
        <id>P35658-5</id>
        <name>5</name>
        <sequence type="described" ref="VSP_034896 VSP_034898 VSP_034899"/>
    </isoform>
</comment>
<comment type="tissue specificity">
    <text>Expressed in thymus, spleen, bone marrow, kidney, brain and testis, but hardly in all other tissues or in whole embryos during development.</text>
</comment>
<comment type="domain">
    <text evidence="22">Contains FG repeats. FG repeats are interaction sites for karyopherins (importins, exportins) and form probably an affinity gradient, guiding the transport proteins unidirectionally with their cargo through the NPC. FG repeat regions are highly flexible and lack ordered secondary structure. The overall conservation of FG repeats regarding exact sequence, spacing, and repeat unit length is limited.</text>
</comment>
<comment type="domain">
    <text>The beta-propeller contains long interblade connector loops, and mediates interaction with DDX19B.</text>
</comment>
<comment type="PTM">
    <text>Probably glycosylated as it reacts with wheat germ agglutinin (WGA).</text>
</comment>
<comment type="disease">
    <text evidence="6">A chromosomal aberration involving NUP214 is found in a subset of acute myeloid leukemia (AML); also known as acute non-lymphocytic leukemia. Translocation t(6;9)(p23;q34) with DEK. It results in the formation of a DEK-CAN fusion gene.</text>
</comment>
<comment type="disease">
    <text evidence="7">A chromosomal aberration involving NUP214 is found in some cases of acute undifferentiated leukemia (AUL). Translocation t(6;9)(q21;q34.1) with SET.</text>
</comment>
<comment type="disease" evidence="15 16">
    <disease id="DI-05581">
        <name>Encephalopathy, acute, infection-induced, 9</name>
        <acronym>IIAE9</acronym>
        <description>An autosomal recessive disorder characterized by infancy-onset of episodic neurodevelopmental regression in association with infection-induced febrile illness. Clinical features include poor overall growth, seizures, myoclonic jerks, microcephaly, ataxia, and cerebellar atrophy.</description>
        <dbReference type="MIM" id="618426"/>
    </disease>
    <text>Disease susceptibility is associated with variants affecting the gene represented in this entry.</text>
</comment>
<comment type="disease">
    <text evidence="4 12">Chromosomal aberrations involving NUP214 are found in acute lymphoblastic leukemia (PubMed:15361874, PubMed:20851865). Translocation t(9;9)(q34;q34) with ABL1 (PubMed:15361874). Translocation t(5;9)(q35;q34) with SQSTM1 (PubMed:20851865).</text>
</comment>
<comment type="sequence caution" evidence="22">
    <conflict type="erroneous initiation">
        <sequence resource="EMBL-CDS" id="BAD07398"/>
    </conflict>
</comment>
<comment type="online information" name="Atlas of Genetics and Cytogenetics in Oncology and Haematology">
    <link uri="https://atlasgeneticsoncology.org/gene/29/CAN"/>
</comment>
<protein>
    <recommendedName>
        <fullName>Nuclear pore complex protein Nup214</fullName>
    </recommendedName>
    <alternativeName>
        <fullName>214 kDa nucleoporin</fullName>
    </alternativeName>
    <alternativeName>
        <fullName>Nucleoporin Nup214</fullName>
    </alternativeName>
    <alternativeName>
        <fullName>Protein CAN</fullName>
    </alternativeName>
</protein>
<feature type="initiator methionine" description="Removed" evidence="29">
    <location>
        <position position="1"/>
    </location>
</feature>
<feature type="chain" id="PRO_0000204861" description="Nuclear pore complex protein Nup214">
    <location>
        <begin position="2"/>
        <end position="2090"/>
    </location>
</feature>
<feature type="repeat" description="Blade 1">
    <location>
        <begin position="41"/>
        <end position="93"/>
    </location>
</feature>
<feature type="repeat" description="Blade 2">
    <location>
        <begin position="94"/>
        <end position="150"/>
    </location>
</feature>
<feature type="repeat" description="Blade 3">
    <location>
        <begin position="151"/>
        <end position="193"/>
    </location>
</feature>
<feature type="repeat" description="Blade 4">
    <location>
        <begin position="194"/>
        <end position="239"/>
    </location>
</feature>
<feature type="repeat" description="Blade 5">
    <location>
        <begin position="240"/>
        <end position="303"/>
    </location>
</feature>
<feature type="repeat" description="Blade 6">
    <location>
        <begin position="304"/>
        <end position="359"/>
    </location>
</feature>
<feature type="repeat" description="Blade 7">
    <location>
        <begin position="360"/>
        <end position="404"/>
    </location>
</feature>
<feature type="repeat" description="1" evidence="22">
    <location>
        <begin position="484"/>
        <end position="485"/>
    </location>
</feature>
<feature type="repeat" description="2" evidence="22">
    <location>
        <begin position="548"/>
        <end position="549"/>
    </location>
</feature>
<feature type="repeat" description="3" evidence="22">
    <location>
        <begin position="1225"/>
        <end position="1226"/>
    </location>
</feature>
<feature type="repeat" description="4" evidence="22">
    <location>
        <begin position="1411"/>
        <end position="1412"/>
    </location>
</feature>
<feature type="repeat" description="5" evidence="22">
    <location>
        <begin position="1427"/>
        <end position="1428"/>
    </location>
</feature>
<feature type="repeat" description="6" evidence="22">
    <location>
        <begin position="1441"/>
        <end position="1442"/>
    </location>
</feature>
<feature type="repeat" description="7" evidence="22">
    <location>
        <begin position="1473"/>
        <end position="1474"/>
    </location>
</feature>
<feature type="repeat" description="8" evidence="22">
    <location>
        <begin position="1635"/>
        <end position="1636"/>
    </location>
</feature>
<feature type="repeat" description="9" evidence="22">
    <location>
        <begin position="1674"/>
        <end position="1675"/>
    </location>
</feature>
<feature type="repeat" description="10" evidence="22">
    <location>
        <begin position="1686"/>
        <end position="1687"/>
    </location>
</feature>
<feature type="repeat" description="11" evidence="22">
    <location>
        <begin position="1713"/>
        <end position="1714"/>
    </location>
</feature>
<feature type="repeat" description="12" evidence="22">
    <location>
        <begin position="1721"/>
        <end position="1722"/>
    </location>
</feature>
<feature type="repeat" description="13" evidence="22">
    <location>
        <begin position="1726"/>
        <end position="1727"/>
    </location>
</feature>
<feature type="repeat" description="14" evidence="22">
    <location>
        <begin position="1732"/>
        <end position="1733"/>
    </location>
</feature>
<feature type="repeat" description="15" evidence="22">
    <location>
        <begin position="1756"/>
        <end position="1757"/>
    </location>
</feature>
<feature type="repeat" description="16" evidence="22">
    <location>
        <begin position="1772"/>
        <end position="1773"/>
    </location>
</feature>
<feature type="repeat" description="17" evidence="22">
    <location>
        <begin position="1786"/>
        <end position="1787"/>
    </location>
</feature>
<feature type="repeat" description="18" evidence="22">
    <location>
        <begin position="1798"/>
        <end position="1799"/>
    </location>
</feature>
<feature type="repeat" description="19" evidence="22">
    <location>
        <begin position="1806"/>
        <end position="1807"/>
    </location>
</feature>
<feature type="repeat" description="20" evidence="22">
    <location>
        <begin position="1812"/>
        <end position="1813"/>
    </location>
</feature>
<feature type="repeat" description="21" evidence="22">
    <location>
        <begin position="1819"/>
        <end position="1820"/>
    </location>
</feature>
<feature type="repeat" description="22" evidence="22">
    <location>
        <begin position="1842"/>
        <end position="1843"/>
    </location>
</feature>
<feature type="repeat" description="23" evidence="22">
    <location>
        <begin position="1851"/>
        <end position="1852"/>
    </location>
</feature>
<feature type="repeat" description="24" evidence="22">
    <location>
        <begin position="1862"/>
        <end position="1863"/>
    </location>
</feature>
<feature type="repeat" description="25" evidence="22">
    <location>
        <begin position="1874"/>
        <end position="1875"/>
    </location>
</feature>
<feature type="repeat" description="26" evidence="22">
    <location>
        <begin position="1910"/>
        <end position="1911"/>
    </location>
</feature>
<feature type="repeat" description="27" evidence="22">
    <location>
        <begin position="1922"/>
        <end position="1923"/>
    </location>
</feature>
<feature type="repeat" description="28" evidence="22">
    <location>
        <begin position="1930"/>
        <end position="1931"/>
    </location>
</feature>
<feature type="repeat" description="29" evidence="22">
    <location>
        <begin position="1938"/>
        <end position="1939"/>
    </location>
</feature>
<feature type="repeat" description="30" evidence="22">
    <location>
        <begin position="1959"/>
        <end position="1960"/>
    </location>
</feature>
<feature type="repeat" description="31" evidence="22">
    <location>
        <begin position="1970"/>
        <end position="1971"/>
    </location>
</feature>
<feature type="repeat" description="32" evidence="22">
    <location>
        <begin position="1976"/>
        <end position="1977"/>
    </location>
</feature>
<feature type="repeat" description="33" evidence="22">
    <location>
        <begin position="1982"/>
        <end position="1983"/>
    </location>
</feature>
<feature type="repeat" description="34" evidence="22">
    <location>
        <begin position="1988"/>
        <end position="1989"/>
    </location>
</feature>
<feature type="repeat" description="35" evidence="22">
    <location>
        <begin position="1994"/>
        <end position="1995"/>
    </location>
</feature>
<feature type="repeat" description="36" evidence="22">
    <location>
        <begin position="2012"/>
        <end position="2013"/>
    </location>
</feature>
<feature type="repeat" description="37" evidence="22">
    <location>
        <begin position="2024"/>
        <end position="2025"/>
    </location>
</feature>
<feature type="repeat" description="38" evidence="22">
    <location>
        <begin position="2026"/>
        <end position="2027"/>
    </location>
</feature>
<feature type="repeat" description="39" evidence="22">
    <location>
        <begin position="2035"/>
        <end position="2036"/>
    </location>
</feature>
<feature type="repeat" description="40" evidence="22">
    <location>
        <begin position="2046"/>
        <end position="2047"/>
    </location>
</feature>
<feature type="repeat" description="41" evidence="22">
    <location>
        <begin position="2056"/>
        <end position="2057"/>
    </location>
</feature>
<feature type="repeat" description="42" evidence="22">
    <location>
        <begin position="2066"/>
        <end position="2067"/>
    </location>
</feature>
<feature type="repeat" description="43" evidence="22">
    <location>
        <begin position="2075"/>
        <end position="2076"/>
    </location>
</feature>
<feature type="repeat" description="44" evidence="22">
    <location>
        <begin position="2085"/>
        <end position="2086"/>
    </location>
</feature>
<feature type="region of interest" description="Seven-bladed beta propeller">
    <location>
        <begin position="41"/>
        <end position="404"/>
    </location>
</feature>
<feature type="region of interest" description="44 X 2 AA repeats of F-G" evidence="22">
    <location>
        <begin position="236"/>
        <end position="1418"/>
    </location>
</feature>
<feature type="region of interest" description="Disordered" evidence="1">
    <location>
        <begin position="422"/>
        <end position="460"/>
    </location>
</feature>
<feature type="region of interest" description="(Microbial infection) Binds human adenovirus 5 (HAdV-5) protein L3 (hexon)" evidence="13">
    <location>
        <begin position="450"/>
        <end position="586"/>
    </location>
</feature>
<feature type="region of interest" description="11 X 5 AA approximate repeats">
    <location>
        <begin position="481"/>
        <end position="2076"/>
    </location>
</feature>
<feature type="region of interest" description="Disordered" evidence="1">
    <location>
        <begin position="489"/>
        <end position="536"/>
    </location>
</feature>
<feature type="region of interest" description="Disordered" evidence="1">
    <location>
        <begin position="597"/>
        <end position="700"/>
    </location>
</feature>
<feature type="region of interest" description="Leucine-zipper 1">
    <location>
        <begin position="740"/>
        <end position="768"/>
    </location>
</feature>
<feature type="region of interest" description="Leucine-zipper 2">
    <location>
        <begin position="861"/>
        <end position="882"/>
    </location>
</feature>
<feature type="region of interest" description="Disordered" evidence="1">
    <location>
        <begin position="987"/>
        <end position="1009"/>
    </location>
</feature>
<feature type="region of interest" description="Disordered" evidence="1">
    <location>
        <begin position="1128"/>
        <end position="1152"/>
    </location>
</feature>
<feature type="region of interest" description="Disordered" evidence="1">
    <location>
        <begin position="1168"/>
        <end position="1213"/>
    </location>
</feature>
<feature type="region of interest" description="Disordered" evidence="1">
    <location>
        <begin position="1234"/>
        <end position="1316"/>
    </location>
</feature>
<feature type="region of interest" description="Disordered" evidence="1">
    <location>
        <begin position="1337"/>
        <end position="1408"/>
    </location>
</feature>
<feature type="region of interest" description="18 X 4 AA approximate repeats">
    <location>
        <begin position="1409"/>
        <end position="2084"/>
    </location>
</feature>
<feature type="region of interest" description="11 X 3 AA approximate repeats">
    <location>
        <begin position="1427"/>
        <end position="2085"/>
    </location>
</feature>
<feature type="region of interest" description="Disordered" evidence="1">
    <location>
        <begin position="1438"/>
        <end position="1467"/>
    </location>
</feature>
<feature type="region of interest" description="Disordered" evidence="1">
    <location>
        <begin position="1479"/>
        <end position="1539"/>
    </location>
</feature>
<feature type="region of interest" description="Disordered" evidence="1">
    <location>
        <begin position="1884"/>
        <end position="1903"/>
    </location>
</feature>
<feature type="coiled-coil region" evidence="9">
    <location>
        <begin position="680"/>
        <end position="1209"/>
    </location>
</feature>
<feature type="compositionally biased region" description="Low complexity" evidence="1">
    <location>
        <begin position="429"/>
        <end position="441"/>
    </location>
</feature>
<feature type="compositionally biased region" description="Low complexity" evidence="1">
    <location>
        <begin position="489"/>
        <end position="513"/>
    </location>
</feature>
<feature type="compositionally biased region" description="Low complexity" evidence="1">
    <location>
        <begin position="524"/>
        <end position="536"/>
    </location>
</feature>
<feature type="compositionally biased region" description="Low complexity" evidence="1">
    <location>
        <begin position="597"/>
        <end position="629"/>
    </location>
</feature>
<feature type="compositionally biased region" description="Low complexity" evidence="1">
    <location>
        <begin position="637"/>
        <end position="658"/>
    </location>
</feature>
<feature type="compositionally biased region" description="Basic and acidic residues" evidence="1">
    <location>
        <begin position="691"/>
        <end position="700"/>
    </location>
</feature>
<feature type="compositionally biased region" description="Basic and acidic residues" evidence="1">
    <location>
        <begin position="997"/>
        <end position="1007"/>
    </location>
</feature>
<feature type="compositionally biased region" description="Polar residues" evidence="1">
    <location>
        <begin position="1128"/>
        <end position="1149"/>
    </location>
</feature>
<feature type="compositionally biased region" description="Polar residues" evidence="1">
    <location>
        <begin position="1168"/>
        <end position="1188"/>
    </location>
</feature>
<feature type="compositionally biased region" description="Polar residues" evidence="1">
    <location>
        <begin position="1199"/>
        <end position="1213"/>
    </location>
</feature>
<feature type="compositionally biased region" description="Polar residues" evidence="1">
    <location>
        <begin position="1234"/>
        <end position="1254"/>
    </location>
</feature>
<feature type="compositionally biased region" description="Polar residues" evidence="1">
    <location>
        <begin position="1273"/>
        <end position="1285"/>
    </location>
</feature>
<feature type="compositionally biased region" description="Low complexity" evidence="1">
    <location>
        <begin position="1288"/>
        <end position="1299"/>
    </location>
</feature>
<feature type="compositionally biased region" description="Polar residues" evidence="1">
    <location>
        <begin position="1301"/>
        <end position="1310"/>
    </location>
</feature>
<feature type="compositionally biased region" description="Polar residues" evidence="1">
    <location>
        <begin position="1347"/>
        <end position="1368"/>
    </location>
</feature>
<feature type="compositionally biased region" description="Low complexity" evidence="1">
    <location>
        <begin position="1386"/>
        <end position="1408"/>
    </location>
</feature>
<feature type="compositionally biased region" description="Polar residues" evidence="1">
    <location>
        <begin position="1438"/>
        <end position="1450"/>
    </location>
</feature>
<feature type="compositionally biased region" description="Low complexity" evidence="1">
    <location>
        <begin position="1479"/>
        <end position="1489"/>
    </location>
</feature>
<feature type="compositionally biased region" description="Low complexity" evidence="1">
    <location>
        <begin position="1508"/>
        <end position="1527"/>
    </location>
</feature>
<feature type="site" description="Breakpoint for translocation to form the NUP214-ABL1 fusion protein" evidence="4">
    <location>
        <begin position="444"/>
        <end position="445"/>
    </location>
</feature>
<feature type="site" description="Breakpoint">
    <location>
        <begin position="812"/>
        <end position="813"/>
    </location>
</feature>
<feature type="site" description="Breakpoint for translocation to form the NUP214-ABL1 fusion protein" evidence="4">
    <location>
        <begin position="1840"/>
        <end position="1841"/>
    </location>
</feature>
<feature type="site" description="Breakpoint for translocation to form the NUP214-ABL1 fusion protein" evidence="4">
    <location>
        <begin position="1916"/>
        <end position="1917"/>
    </location>
</feature>
<feature type="site" description="Breakpoint for translocation to form the NUP214-ABL1 fusion protein" evidence="4">
    <location>
        <begin position="1967"/>
        <end position="1968"/>
    </location>
</feature>
<feature type="site" description="Breakpoint for translocation to form the NUP214-SQSTM1 fusion protein" evidence="12">
    <location>
        <begin position="1967"/>
        <end position="1968"/>
    </location>
</feature>
<feature type="site" description="Breakpoint for translocation to form the NUP214-ABL1 fusion protein" evidence="4">
    <location>
        <begin position="2071"/>
        <end position="2072"/>
    </location>
</feature>
<feature type="modified residue" description="N-acetylglycine" evidence="29">
    <location>
        <position position="2"/>
    </location>
</feature>
<feature type="modified residue" description="Phosphoserine" evidence="30">
    <location>
        <position position="30"/>
    </location>
</feature>
<feature type="modified residue" description="Phosphothreonine" evidence="30">
    <location>
        <position position="416"/>
    </location>
</feature>
<feature type="modified residue" description="Phosphoserine" evidence="30">
    <location>
        <position position="421"/>
    </location>
</feature>
<feature type="modified residue" description="Phosphoserine" evidence="23 24 26 30 31">
    <location>
        <position position="430"/>
    </location>
</feature>
<feature type="modified residue" description="Phosphoserine" evidence="28 30 31">
    <location>
        <position position="433"/>
    </location>
</feature>
<feature type="modified residue" description="Phosphothreonine" evidence="24 28 30">
    <location>
        <position position="434"/>
    </location>
</feature>
<feature type="modified residue" description="Phosphothreonine" evidence="24 28 30">
    <location>
        <position position="437"/>
    </location>
</feature>
<feature type="modified residue" description="Phosphothreonine" evidence="23 24">
    <location>
        <position position="439"/>
    </location>
</feature>
<feature type="modified residue" description="Phosphoserine" evidence="25 30">
    <location>
        <position position="651"/>
    </location>
</feature>
<feature type="modified residue" description="Phosphoserine" evidence="27 28 30">
    <location>
        <position position="657"/>
    </location>
</feature>
<feature type="modified residue" description="Phosphoserine" evidence="24 30">
    <location>
        <position position="666"/>
    </location>
</feature>
<feature type="modified residue" description="Phosphothreonine" evidence="27 28 30">
    <location>
        <position position="670"/>
    </location>
</feature>
<feature type="modified residue" description="Phosphoserine" evidence="27 28 30 31">
    <location>
        <position position="678"/>
    </location>
</feature>
<feature type="modified residue" description="Phosphoserine" evidence="30">
    <location>
        <position position="760"/>
    </location>
</feature>
<feature type="modified residue" description="Phosphoserine" evidence="25 27 28 30">
    <location>
        <position position="940"/>
    </location>
</feature>
<feature type="modified residue" description="Phosphoserine" evidence="24">
    <location>
        <position position="970"/>
    </location>
</feature>
<feature type="modified residue" description="Phosphoserine" evidence="24">
    <location>
        <position position="974"/>
    </location>
</feature>
<feature type="modified residue" description="Phosphoserine" evidence="26">
    <location>
        <position position="989"/>
    </location>
</feature>
<feature type="modified residue" description="Phosphothreonine" evidence="30">
    <location>
        <position position="1021"/>
    </location>
</feature>
<feature type="modified residue" description="Phosphoserine" evidence="24 30">
    <location>
        <position position="1023"/>
    </location>
</feature>
<feature type="modified residue" description="Phosphoserine" evidence="27 30">
    <location>
        <position position="1045"/>
    </location>
</feature>
<feature type="modified residue" description="Phosphoserine" evidence="30">
    <location>
        <position position="1056"/>
    </location>
</feature>
<feature type="modified residue" description="Phosphoserine" evidence="27 30">
    <location>
        <position position="1081"/>
    </location>
</feature>
<feature type="modified residue" description="Phosphothreonine" evidence="27">
    <location>
        <position position="1134"/>
    </location>
</feature>
<feature type="modified residue" description="Phosphothreonine" evidence="27">
    <location>
        <position position="1150"/>
    </location>
</feature>
<feature type="modified residue" description="Phosphothreonine" evidence="27 30">
    <location>
        <position position="1156"/>
    </location>
</feature>
<feature type="modified residue" description="Phosphoserine" evidence="25">
    <location>
        <position position="1181"/>
    </location>
</feature>
<feature type="modified residue" description="Phosphothreonine" evidence="27">
    <location>
        <position position="1312"/>
    </location>
</feature>
<feature type="modified residue" description="Phosphoserine" evidence="30">
    <location>
        <position position="1353"/>
    </location>
</feature>
<feature type="modified residue" description="Phosphoserine" evidence="24">
    <location>
        <position position="1963"/>
    </location>
</feature>
<feature type="modified residue" description="Phosphoserine" evidence="27">
    <location>
        <position position="1985"/>
    </location>
</feature>
<feature type="cross-link" description="Glycyl lysine isopeptide (Lys-Gly) (interchain with G-Cter in SUMO2)" evidence="32">
    <location>
        <position position="1538"/>
    </location>
</feature>
<feature type="splice variant" id="VSP_034896" description="In isoform 2, isoform 4 and isoform 5." evidence="19 20">
    <original>KFTAAATSTPVS</original>
    <variation>N</variation>
    <location>
        <begin position="590"/>
        <end position="601"/>
    </location>
</feature>
<feature type="splice variant" id="VSP_034897" description="In isoform 3 and isoform 4." evidence="19">
    <original>S</original>
    <variation>SA</variation>
    <location>
        <position position="648"/>
    </location>
</feature>
<feature type="splice variant" id="VSP_034898" description="In isoform 5." evidence="20">
    <location>
        <begin position="1139"/>
        <end position="1148"/>
    </location>
</feature>
<feature type="splice variant" id="VSP_034899" description="In isoform 5." evidence="20">
    <original>FGSSSNTTSFGTLASQNAPTFGSLSQQTSGFGTQSSGFSGFGSGTGGFSFGSNNSSVQGFGGWRS</original>
    <variation>SLAMSLSPTLKGRLLLMRPKAGGGREQAAPGRKSNESRSLGHLCMERALTSPLKVWEQQQHHILRHARESECPHFRITVPTDFWFWDPE</variation>
    <location>
        <begin position="2026"/>
        <end position="2090"/>
    </location>
</feature>
<feature type="sequence variant" id="VAR_082629" description="In IIAE9; decreased nuclear transport in patient cells; decreased protein levels in patient cells; dbSNP:rs143595616." evidence="16">
    <original>R</original>
    <variation>C</variation>
    <location>
        <position position="38"/>
    </location>
</feature>
<feature type="sequence variant" id="VAR_082630" description="In IIAE9; uncertain significance; dbSNP:rs1564175808." evidence="15">
    <original>D</original>
    <variation>G</variation>
    <location>
        <position position="154"/>
    </location>
</feature>
<feature type="sequence variant" id="VAR_082631" description="In IIAE9; dbSNP:rs563025075." evidence="16">
    <original>P</original>
    <variation>S</variation>
    <location>
        <position position="387"/>
    </location>
</feature>
<feature type="sequence variant" id="VAR_035856" description="In a breast cancer sample; somatic mutation." evidence="8">
    <original>G</original>
    <variation>A</variation>
    <location>
        <position position="424"/>
    </location>
</feature>
<feature type="sequence variant" id="VAR_045691" description="In dbSNP:rs103612." evidence="5 6">
    <original>P</original>
    <variation>S</variation>
    <location>
        <position position="574"/>
    </location>
</feature>
<feature type="sequence variant" id="VAR_035857" description="In a breast cancer sample; somatic mutation; dbSNP:rs777822003." evidence="8">
    <original>P</original>
    <variation>L</variation>
    <location>
        <position position="1378"/>
    </location>
</feature>
<feature type="sequence variant" id="VAR_035858" description="In a breast cancer sample; somatic mutation." evidence="8">
    <original>A</original>
    <variation>V</variation>
    <location>
        <position position="1392"/>
    </location>
</feature>
<feature type="sequence variant" id="VAR_061533" description="In dbSNP:rs28594669.">
    <original>G</original>
    <variation>A</variation>
    <location>
        <position position="1592"/>
    </location>
</feature>
<feature type="mutagenesis site" description="Reduced binding to DDX19B." evidence="10">
    <original>V</original>
    <variation>A</variation>
    <location>
        <position position="353"/>
    </location>
</feature>
<feature type="mutagenesis site" description="Impairs interaction with DDX19B." evidence="10">
    <original>D</original>
    <variation>R</variation>
    <location>
        <position position="359"/>
    </location>
</feature>
<feature type="sequence conflict" description="In Ref. 1; CAA45535." evidence="22" ref="1">
    <original>G</original>
    <variation>A</variation>
    <location>
        <position position="149"/>
    </location>
</feature>
<feature type="sequence conflict" description="In Ref. 1; CAA45535." evidence="22" ref="1">
    <original>A</original>
    <variation>D</variation>
    <location>
        <position position="175"/>
    </location>
</feature>
<feature type="sequence conflict" description="In Ref. 1; CAA45535." evidence="22" ref="1">
    <original>AA</original>
    <variation>QL</variation>
    <location>
        <begin position="1091"/>
        <end position="1092"/>
    </location>
</feature>
<feature type="sequence conflict" description="In Ref. 5; AAH45620." evidence="22" ref="5">
    <original>S</original>
    <variation>N</variation>
    <location>
        <position position="1872"/>
    </location>
</feature>
<feature type="strand" evidence="33">
    <location>
        <begin position="4"/>
        <end position="7"/>
    </location>
</feature>
<feature type="strand" evidence="33">
    <location>
        <begin position="11"/>
        <end position="21"/>
    </location>
</feature>
<feature type="strand" evidence="33">
    <location>
        <begin position="24"/>
        <end position="26"/>
    </location>
</feature>
<feature type="strand" evidence="33">
    <location>
        <begin position="42"/>
        <end position="45"/>
    </location>
</feature>
<feature type="turn" evidence="33">
    <location>
        <begin position="46"/>
        <end position="49"/>
    </location>
</feature>
<feature type="strand" evidence="33">
    <location>
        <begin position="50"/>
        <end position="55"/>
    </location>
</feature>
<feature type="strand" evidence="33">
    <location>
        <begin position="58"/>
        <end position="63"/>
    </location>
</feature>
<feature type="helix" evidence="33">
    <location>
        <begin position="64"/>
        <end position="67"/>
    </location>
</feature>
<feature type="strand" evidence="33">
    <location>
        <begin position="80"/>
        <end position="82"/>
    </location>
</feature>
<feature type="strand" evidence="33">
    <location>
        <begin position="87"/>
        <end position="89"/>
    </location>
</feature>
<feature type="strand" evidence="33">
    <location>
        <begin position="95"/>
        <end position="100"/>
    </location>
</feature>
<feature type="strand" evidence="33">
    <location>
        <begin position="106"/>
        <end position="113"/>
    </location>
</feature>
<feature type="turn" evidence="33">
    <location>
        <begin position="114"/>
        <end position="116"/>
    </location>
</feature>
<feature type="strand" evidence="33">
    <location>
        <begin position="117"/>
        <end position="124"/>
    </location>
</feature>
<feature type="helix" evidence="33">
    <location>
        <begin position="125"/>
        <end position="129"/>
    </location>
</feature>
<feature type="strand" evidence="33">
    <location>
        <begin position="139"/>
        <end position="143"/>
    </location>
</feature>
<feature type="helix" evidence="33">
    <location>
        <begin position="148"/>
        <end position="150"/>
    </location>
</feature>
<feature type="strand" evidence="33">
    <location>
        <begin position="151"/>
        <end position="157"/>
    </location>
</feature>
<feature type="strand" evidence="33">
    <location>
        <begin position="164"/>
        <end position="169"/>
    </location>
</feature>
<feature type="strand" evidence="33">
    <location>
        <begin position="174"/>
        <end position="189"/>
    </location>
</feature>
<feature type="helix" evidence="33">
    <location>
        <begin position="191"/>
        <end position="193"/>
    </location>
</feature>
<feature type="strand" evidence="33">
    <location>
        <begin position="195"/>
        <end position="200"/>
    </location>
</feature>
<feature type="strand" evidence="33">
    <location>
        <begin position="207"/>
        <end position="211"/>
    </location>
</feature>
<feature type="strand" evidence="33">
    <location>
        <begin position="216"/>
        <end position="219"/>
    </location>
</feature>
<feature type="strand" evidence="33">
    <location>
        <begin position="225"/>
        <end position="229"/>
    </location>
</feature>
<feature type="strand" evidence="34">
    <location>
        <begin position="237"/>
        <end position="239"/>
    </location>
</feature>
<feature type="strand" evidence="33">
    <location>
        <begin position="241"/>
        <end position="250"/>
    </location>
</feature>
<feature type="strand" evidence="33">
    <location>
        <begin position="253"/>
        <end position="260"/>
    </location>
</feature>
<feature type="strand" evidence="33">
    <location>
        <begin position="265"/>
        <end position="267"/>
    </location>
</feature>
<feature type="strand" evidence="33">
    <location>
        <begin position="270"/>
        <end position="275"/>
    </location>
</feature>
<feature type="strand" evidence="33">
    <location>
        <begin position="286"/>
        <end position="289"/>
    </location>
</feature>
<feature type="strand" evidence="33">
    <location>
        <begin position="299"/>
        <end position="301"/>
    </location>
</feature>
<feature type="strand" evidence="33">
    <location>
        <begin position="305"/>
        <end position="310"/>
    </location>
</feature>
<feature type="helix" evidence="33">
    <location>
        <begin position="311"/>
        <end position="313"/>
    </location>
</feature>
<feature type="strand" evidence="33">
    <location>
        <begin position="315"/>
        <end position="320"/>
    </location>
</feature>
<feature type="strand" evidence="34">
    <location>
        <begin position="323"/>
        <end position="325"/>
    </location>
</feature>
<feature type="strand" evidence="33">
    <location>
        <begin position="327"/>
        <end position="331"/>
    </location>
</feature>
<feature type="strand" evidence="33">
    <location>
        <begin position="338"/>
        <end position="343"/>
    </location>
</feature>
<feature type="helix" evidence="33">
    <location>
        <begin position="345"/>
        <end position="347"/>
    </location>
</feature>
<feature type="strand" evidence="35">
    <location>
        <begin position="357"/>
        <end position="359"/>
    </location>
</feature>
<feature type="strand" evidence="33">
    <location>
        <begin position="362"/>
        <end position="368"/>
    </location>
</feature>
<feature type="strand" evidence="33">
    <location>
        <begin position="375"/>
        <end position="378"/>
    </location>
</feature>
<feature type="strand" evidence="33">
    <location>
        <begin position="381"/>
        <end position="383"/>
    </location>
</feature>
<feature type="strand" evidence="33">
    <location>
        <begin position="388"/>
        <end position="393"/>
    </location>
</feature>
<feature type="strand" evidence="33">
    <location>
        <begin position="396"/>
        <end position="405"/>
    </location>
</feature>
<feature type="helix" evidence="36">
    <location>
        <begin position="1925"/>
        <end position="1929"/>
    </location>
</feature>
<feature type="strand" evidence="36">
    <location>
        <begin position="1937"/>
        <end position="1941"/>
    </location>
</feature>
<feature type="turn" evidence="36">
    <location>
        <begin position="1943"/>
        <end position="1945"/>
    </location>
</feature>
<feature type="helix" evidence="36">
    <location>
        <begin position="2016"/>
        <end position="2019"/>
    </location>
</feature>
<proteinExistence type="evidence at protein level"/>
<dbReference type="EMBL" id="X64228">
    <property type="protein sequence ID" value="CAA45535.1"/>
    <property type="molecule type" value="mRNA"/>
</dbReference>
<dbReference type="EMBL" id="AB159230">
    <property type="protein sequence ID" value="BAD07398.1"/>
    <property type="status" value="ALT_INIT"/>
    <property type="molecule type" value="mRNA"/>
</dbReference>
<dbReference type="EMBL" id="D14689">
    <property type="protein sequence ID" value="BAA03515.1"/>
    <property type="molecule type" value="mRNA"/>
</dbReference>
<dbReference type="EMBL" id="AL157938">
    <property type="status" value="NOT_ANNOTATED_CDS"/>
    <property type="molecule type" value="Genomic_DNA"/>
</dbReference>
<dbReference type="EMBL" id="BC045620">
    <property type="protein sequence ID" value="AAH45620.2"/>
    <property type="molecule type" value="mRNA"/>
</dbReference>
<dbReference type="EMBL" id="BC105998">
    <property type="protein sequence ID" value="AAI05999.1"/>
    <property type="molecule type" value="mRNA"/>
</dbReference>
<dbReference type="CCDS" id="CCDS6940.1">
    <molecule id="P35658-1"/>
</dbReference>
<dbReference type="CCDS" id="CCDS83429.1">
    <molecule id="P35658-4"/>
</dbReference>
<dbReference type="PIR" id="S26058">
    <property type="entry name" value="S26058"/>
</dbReference>
<dbReference type="RefSeq" id="NP_001305253.1">
    <molecule id="P35658-4"/>
    <property type="nucleotide sequence ID" value="NM_001318324.2"/>
</dbReference>
<dbReference type="RefSeq" id="NP_001305254.1">
    <property type="nucleotide sequence ID" value="NM_001318325.1"/>
</dbReference>
<dbReference type="RefSeq" id="NP_005076.3">
    <molecule id="P35658-1"/>
    <property type="nucleotide sequence ID" value="NM_005085.3"/>
</dbReference>
<dbReference type="PDB" id="2OIT">
    <property type="method" value="X-ray"/>
    <property type="resolution" value="1.65 A"/>
    <property type="chains" value="A=1-434"/>
</dbReference>
<dbReference type="PDB" id="3FHC">
    <property type="method" value="X-ray"/>
    <property type="resolution" value="2.80 A"/>
    <property type="chains" value="A=1-405"/>
</dbReference>
<dbReference type="PDB" id="3FMO">
    <property type="method" value="X-ray"/>
    <property type="resolution" value="2.51 A"/>
    <property type="chains" value="A=1-450"/>
</dbReference>
<dbReference type="PDB" id="3FMP">
    <property type="method" value="X-ray"/>
    <property type="resolution" value="3.19 A"/>
    <property type="chains" value="A/C=1-450"/>
</dbReference>
<dbReference type="PDB" id="5DIS">
    <property type="method" value="X-ray"/>
    <property type="resolution" value="2.85 A"/>
    <property type="chains" value="D=1916-2027"/>
</dbReference>
<dbReference type="PDB" id="7R5J">
    <property type="method" value="EM"/>
    <property type="resolution" value="50.00 A"/>
    <property type="chains" value="V0=1-2090"/>
</dbReference>
<dbReference type="PDB" id="7R5K">
    <property type="method" value="EM"/>
    <property type="resolution" value="12.00 A"/>
    <property type="chains" value="V0=1-2090"/>
</dbReference>
<dbReference type="PDBsum" id="2OIT"/>
<dbReference type="PDBsum" id="3FHC"/>
<dbReference type="PDBsum" id="3FMO"/>
<dbReference type="PDBsum" id="3FMP"/>
<dbReference type="PDBsum" id="5DIS"/>
<dbReference type="PDBsum" id="7R5J"/>
<dbReference type="PDBsum" id="7R5K"/>
<dbReference type="EMDB" id="EMD-14321"/>
<dbReference type="EMDB" id="EMD-14322"/>
<dbReference type="SMR" id="P35658"/>
<dbReference type="BioGRID" id="113717">
    <property type="interactions" value="216"/>
</dbReference>
<dbReference type="ComplexPortal" id="CPX-873">
    <property type="entry name" value="Nuclear pore complex"/>
</dbReference>
<dbReference type="CORUM" id="P35658"/>
<dbReference type="DIP" id="DIP-38367N"/>
<dbReference type="FunCoup" id="P35658">
    <property type="interactions" value="3959"/>
</dbReference>
<dbReference type="IntAct" id="P35658">
    <property type="interactions" value="122"/>
</dbReference>
<dbReference type="MINT" id="P35658"/>
<dbReference type="STRING" id="9606.ENSP00000352400"/>
<dbReference type="TCDB" id="1.I.1.1.3">
    <property type="family name" value="the nuclear pore complex (npc) family"/>
</dbReference>
<dbReference type="GlyConnect" id="2843">
    <property type="glycosylation" value="1 O-GlcNAc glycan (4 sites)"/>
</dbReference>
<dbReference type="GlyCosmos" id="P35658">
    <property type="glycosylation" value="176 sites, 2 glycans"/>
</dbReference>
<dbReference type="GlyGen" id="P35658">
    <property type="glycosylation" value="218 sites, 1 N-linked glycan (1 site), 2 O-linked glycans (213 sites)"/>
</dbReference>
<dbReference type="iPTMnet" id="P35658"/>
<dbReference type="MetOSite" id="P35658"/>
<dbReference type="PhosphoSitePlus" id="P35658"/>
<dbReference type="SwissPalm" id="P35658"/>
<dbReference type="BioMuta" id="NUP214"/>
<dbReference type="DMDM" id="205831380"/>
<dbReference type="jPOST" id="P35658"/>
<dbReference type="MassIVE" id="P35658"/>
<dbReference type="PaxDb" id="9606-ENSP00000352400"/>
<dbReference type="PeptideAtlas" id="P35658"/>
<dbReference type="ProteomicsDB" id="55122">
    <molecule id="P35658-1"/>
</dbReference>
<dbReference type="ProteomicsDB" id="55123">
    <molecule id="P35658-2"/>
</dbReference>
<dbReference type="ProteomicsDB" id="55124">
    <molecule id="P35658-3"/>
</dbReference>
<dbReference type="ProteomicsDB" id="55125">
    <molecule id="P35658-4"/>
</dbReference>
<dbReference type="ProteomicsDB" id="55126">
    <molecule id="P35658-5"/>
</dbReference>
<dbReference type="Pumba" id="P35658"/>
<dbReference type="Antibodypedia" id="18059">
    <property type="antibodies" value="76 antibodies from 19 providers"/>
</dbReference>
<dbReference type="DNASU" id="8021"/>
<dbReference type="Ensembl" id="ENST00000359428.10">
    <molecule id="P35658-1"/>
    <property type="protein sequence ID" value="ENSP00000352400.5"/>
    <property type="gene ID" value="ENSG00000126883.19"/>
</dbReference>
<dbReference type="Ensembl" id="ENST00000411637.6">
    <molecule id="P35658-4"/>
    <property type="protein sequence ID" value="ENSP00000396576.2"/>
    <property type="gene ID" value="ENSG00000126883.19"/>
</dbReference>
<dbReference type="GeneID" id="8021"/>
<dbReference type="KEGG" id="hsa:8021"/>
<dbReference type="MANE-Select" id="ENST00000359428.10">
    <property type="protein sequence ID" value="ENSP00000352400.5"/>
    <property type="RefSeq nucleotide sequence ID" value="NM_005085.4"/>
    <property type="RefSeq protein sequence ID" value="NP_005076.3"/>
</dbReference>
<dbReference type="UCSC" id="uc004cag.4">
    <molecule id="P35658-1"/>
    <property type="organism name" value="human"/>
</dbReference>
<dbReference type="AGR" id="HGNC:8064"/>
<dbReference type="CTD" id="8021"/>
<dbReference type="DisGeNET" id="8021"/>
<dbReference type="GeneCards" id="NUP214"/>
<dbReference type="HGNC" id="HGNC:8064">
    <property type="gene designation" value="NUP214"/>
</dbReference>
<dbReference type="HPA" id="ENSG00000126883">
    <property type="expression patterns" value="Tissue enhanced (testis)"/>
</dbReference>
<dbReference type="MalaCards" id="NUP214"/>
<dbReference type="MIM" id="114350">
    <property type="type" value="gene"/>
</dbReference>
<dbReference type="MIM" id="618426">
    <property type="type" value="phenotype"/>
</dbReference>
<dbReference type="neXtProt" id="NX_P35658"/>
<dbReference type="OpenTargets" id="ENSG00000126883"/>
<dbReference type="Orphanet" id="402014">
    <property type="disease" value="Acute myeloid leukemia with t(6;9)(p23;q34)"/>
</dbReference>
<dbReference type="Orphanet" id="99861">
    <property type="disease" value="Precursor T-cell acute lymphoblastic leukemia"/>
</dbReference>
<dbReference type="PharmGKB" id="PA31851"/>
<dbReference type="VEuPathDB" id="HostDB:ENSG00000126883"/>
<dbReference type="eggNOG" id="KOG3630">
    <property type="taxonomic scope" value="Eukaryota"/>
</dbReference>
<dbReference type="GeneTree" id="ENSGT00940000153253"/>
<dbReference type="HOGENOM" id="CLU_001606_0_0_1"/>
<dbReference type="InParanoid" id="P35658"/>
<dbReference type="OMA" id="WLSTFQF"/>
<dbReference type="OrthoDB" id="248320at2759"/>
<dbReference type="PAN-GO" id="P35658">
    <property type="GO annotations" value="5 GO annotations based on evolutionary models"/>
</dbReference>
<dbReference type="PhylomeDB" id="P35658"/>
<dbReference type="TreeFam" id="TF323517"/>
<dbReference type="PathwayCommons" id="P35658"/>
<dbReference type="Reactome" id="R-HSA-1169408">
    <property type="pathway name" value="ISG15 antiviral mechanism"/>
</dbReference>
<dbReference type="Reactome" id="R-HSA-159227">
    <property type="pathway name" value="Transport of the SLBP independent Mature mRNA"/>
</dbReference>
<dbReference type="Reactome" id="R-HSA-159230">
    <property type="pathway name" value="Transport of the SLBP Dependant Mature mRNA"/>
</dbReference>
<dbReference type="Reactome" id="R-HSA-159231">
    <property type="pathway name" value="Transport of Mature mRNA Derived from an Intronless Transcript"/>
</dbReference>
<dbReference type="Reactome" id="R-HSA-159236">
    <property type="pathway name" value="Transport of Mature mRNA derived from an Intron-Containing Transcript"/>
</dbReference>
<dbReference type="Reactome" id="R-HSA-165054">
    <property type="pathway name" value="Rev-mediated nuclear export of HIV RNA"/>
</dbReference>
<dbReference type="Reactome" id="R-HSA-168271">
    <property type="pathway name" value="Transport of Ribonucleoproteins into the Host Nucleus"/>
</dbReference>
<dbReference type="Reactome" id="R-HSA-168276">
    <property type="pathway name" value="NS1 Mediated Effects on Host Pathways"/>
</dbReference>
<dbReference type="Reactome" id="R-HSA-168325">
    <property type="pathway name" value="Viral Messenger RNA Synthesis"/>
</dbReference>
<dbReference type="Reactome" id="R-HSA-168333">
    <property type="pathway name" value="NEP/NS2 Interacts with the Cellular Export Machinery"/>
</dbReference>
<dbReference type="Reactome" id="R-HSA-170822">
    <property type="pathway name" value="Regulation of Glucokinase by Glucokinase Regulatory Protein"/>
</dbReference>
<dbReference type="Reactome" id="R-HSA-180746">
    <property type="pathway name" value="Nuclear import of Rev protein"/>
</dbReference>
<dbReference type="Reactome" id="R-HSA-180910">
    <property type="pathway name" value="Vpr-mediated nuclear import of PICs"/>
</dbReference>
<dbReference type="Reactome" id="R-HSA-191859">
    <property type="pathway name" value="snRNP Assembly"/>
</dbReference>
<dbReference type="Reactome" id="R-HSA-3108214">
    <property type="pathway name" value="SUMOylation of DNA damage response and repair proteins"/>
</dbReference>
<dbReference type="Reactome" id="R-HSA-3232142">
    <property type="pathway name" value="SUMOylation of ubiquitinylation proteins"/>
</dbReference>
<dbReference type="Reactome" id="R-HSA-3301854">
    <property type="pathway name" value="Nuclear Pore Complex (NPC) Disassembly"/>
</dbReference>
<dbReference type="Reactome" id="R-HSA-3371453">
    <property type="pathway name" value="Regulation of HSF1-mediated heat shock response"/>
</dbReference>
<dbReference type="Reactome" id="R-HSA-4085377">
    <property type="pathway name" value="SUMOylation of SUMOylation proteins"/>
</dbReference>
<dbReference type="Reactome" id="R-HSA-450520">
    <property type="pathway name" value="HuR (ELAVL1) binds and stabilizes mRNA"/>
</dbReference>
<dbReference type="Reactome" id="R-HSA-4551638">
    <property type="pathway name" value="SUMOylation of chromatin organization proteins"/>
</dbReference>
<dbReference type="Reactome" id="R-HSA-4570464">
    <property type="pathway name" value="SUMOylation of RNA binding proteins"/>
</dbReference>
<dbReference type="Reactome" id="R-HSA-4615885">
    <property type="pathway name" value="SUMOylation of DNA replication proteins"/>
</dbReference>
<dbReference type="Reactome" id="R-HSA-5578749">
    <property type="pathway name" value="Transcriptional regulation by small RNAs"/>
</dbReference>
<dbReference type="Reactome" id="R-HSA-5619107">
    <property type="pathway name" value="Defective TPR may confer susceptibility towards thyroid papillary carcinoma (TPC)"/>
</dbReference>
<dbReference type="Reactome" id="R-HSA-6784531">
    <property type="pathway name" value="tRNA processing in the nucleus"/>
</dbReference>
<dbReference type="Reactome" id="R-HSA-9609690">
    <property type="pathway name" value="HCMV Early Events"/>
</dbReference>
<dbReference type="Reactome" id="R-HSA-9610379">
    <property type="pathway name" value="HCMV Late Events"/>
</dbReference>
<dbReference type="Reactome" id="R-HSA-9705671">
    <property type="pathway name" value="SARS-CoV-2 activates/modulates innate and adaptive immune responses"/>
</dbReference>
<dbReference type="SignaLink" id="P35658"/>
<dbReference type="SIGNOR" id="P35658"/>
<dbReference type="BioGRID-ORCS" id="8021">
    <property type="hits" value="739 hits in 1160 CRISPR screens"/>
</dbReference>
<dbReference type="ChiTaRS" id="NUP214">
    <property type="organism name" value="human"/>
</dbReference>
<dbReference type="EvolutionaryTrace" id="P35658"/>
<dbReference type="GeneWiki" id="NUP214"/>
<dbReference type="GenomeRNAi" id="8021"/>
<dbReference type="Pharos" id="P35658">
    <property type="development level" value="Tbio"/>
</dbReference>
<dbReference type="PRO" id="PR:P35658"/>
<dbReference type="Proteomes" id="UP000005640">
    <property type="component" value="Chromosome 9"/>
</dbReference>
<dbReference type="RNAct" id="P35658">
    <property type="molecule type" value="protein"/>
</dbReference>
<dbReference type="Bgee" id="ENSG00000126883">
    <property type="expression patterns" value="Expressed in left testis and 164 other cell types or tissues"/>
</dbReference>
<dbReference type="ExpressionAtlas" id="P35658">
    <property type="expression patterns" value="baseline and differential"/>
</dbReference>
<dbReference type="GO" id="GO:1990876">
    <property type="term" value="C:cytoplasmic side of nuclear pore"/>
    <property type="evidence" value="ECO:0000314"/>
    <property type="project" value="GO_Central"/>
</dbReference>
<dbReference type="GO" id="GO:0005829">
    <property type="term" value="C:cytosol"/>
    <property type="evidence" value="ECO:0000304"/>
    <property type="project" value="Reactome"/>
</dbReference>
<dbReference type="GO" id="GO:0005635">
    <property type="term" value="C:nuclear envelope"/>
    <property type="evidence" value="ECO:0000314"/>
    <property type="project" value="ComplexPortal"/>
</dbReference>
<dbReference type="GO" id="GO:0005643">
    <property type="term" value="C:nuclear pore"/>
    <property type="evidence" value="ECO:0000318"/>
    <property type="project" value="GO_Central"/>
</dbReference>
<dbReference type="GO" id="GO:0005654">
    <property type="term" value="C:nucleoplasm"/>
    <property type="evidence" value="ECO:0000304"/>
    <property type="project" value="Reactome"/>
</dbReference>
<dbReference type="GO" id="GO:0005049">
    <property type="term" value="F:nuclear export signal receptor activity"/>
    <property type="evidence" value="ECO:0000314"/>
    <property type="project" value="GO_Central"/>
</dbReference>
<dbReference type="GO" id="GO:0008139">
    <property type="term" value="F:nuclear localization sequence binding"/>
    <property type="evidence" value="ECO:0000318"/>
    <property type="project" value="GO_Central"/>
</dbReference>
<dbReference type="GO" id="GO:0017056">
    <property type="term" value="F:structural constituent of nuclear pore"/>
    <property type="evidence" value="ECO:0000318"/>
    <property type="project" value="GO_Central"/>
</dbReference>
<dbReference type="GO" id="GO:0006406">
    <property type="term" value="P:mRNA export from nucleus"/>
    <property type="evidence" value="ECO:0000315"/>
    <property type="project" value="UniProtKB"/>
</dbReference>
<dbReference type="GO" id="GO:0006913">
    <property type="term" value="P:nucleocytoplasmic transport"/>
    <property type="evidence" value="ECO:0000303"/>
    <property type="project" value="ComplexPortal"/>
</dbReference>
<dbReference type="GO" id="GO:0006611">
    <property type="term" value="P:protein export from nucleus"/>
    <property type="evidence" value="ECO:0000315"/>
    <property type="project" value="MGI"/>
</dbReference>
<dbReference type="GO" id="GO:0006606">
    <property type="term" value="P:protein import into nucleus"/>
    <property type="evidence" value="ECO:0000318"/>
    <property type="project" value="GO_Central"/>
</dbReference>
<dbReference type="GO" id="GO:0051726">
    <property type="term" value="P:regulation of cell cycle"/>
    <property type="evidence" value="ECO:0007669"/>
    <property type="project" value="Ensembl"/>
</dbReference>
<dbReference type="GO" id="GO:0046822">
    <property type="term" value="P:regulation of nucleocytoplasmic transport"/>
    <property type="evidence" value="ECO:0000315"/>
    <property type="project" value="UniProtKB"/>
</dbReference>
<dbReference type="GO" id="GO:0006405">
    <property type="term" value="P:RNA export from nucleus"/>
    <property type="evidence" value="ECO:0000318"/>
    <property type="project" value="GO_Central"/>
</dbReference>
<dbReference type="FunFam" id="2.130.10.10:FF:000142">
    <property type="entry name" value="Nuclear pore complex protein Nup214"/>
    <property type="match status" value="1"/>
</dbReference>
<dbReference type="Gene3D" id="2.130.10.10">
    <property type="entry name" value="YVTN repeat-like/Quinoprotein amine dehydrogenase"/>
    <property type="match status" value="1"/>
</dbReference>
<dbReference type="InterPro" id="IPR026054">
    <property type="entry name" value="Nucleoporin"/>
</dbReference>
<dbReference type="InterPro" id="IPR039462">
    <property type="entry name" value="Nup159/Nup146_N"/>
</dbReference>
<dbReference type="InterPro" id="IPR041553">
    <property type="entry name" value="Nup214_FG"/>
</dbReference>
<dbReference type="InterPro" id="IPR015943">
    <property type="entry name" value="WD40/YVTN_repeat-like_dom_sf"/>
</dbReference>
<dbReference type="InterPro" id="IPR001680">
    <property type="entry name" value="WD40_rpt"/>
</dbReference>
<dbReference type="PANTHER" id="PTHR23193">
    <property type="entry name" value="NUCLEAR PORE COMPLEX PROTEIN NUP"/>
    <property type="match status" value="1"/>
</dbReference>
<dbReference type="PANTHER" id="PTHR23193:SF21">
    <property type="entry name" value="NUCLEAR PORE COMPLEX PROTEIN NUP214"/>
    <property type="match status" value="1"/>
</dbReference>
<dbReference type="Pfam" id="PF16755">
    <property type="entry name" value="Beta-prop_NUP159_NUP214"/>
    <property type="match status" value="1"/>
</dbReference>
<dbReference type="Pfam" id="PF18617">
    <property type="entry name" value="Nup214_FG"/>
    <property type="match status" value="1"/>
</dbReference>
<dbReference type="SMART" id="SM00320">
    <property type="entry name" value="WD40"/>
    <property type="match status" value="2"/>
</dbReference>
<dbReference type="SUPFAM" id="SSF117289">
    <property type="entry name" value="Nucleoporin domain"/>
    <property type="match status" value="1"/>
</dbReference>
<gene>
    <name type="primary">NUP214</name>
    <name type="synonym">CAIN</name>
    <name type="synonym">CAN</name>
    <name type="synonym">KIAA0023</name>
</gene>
<keyword id="KW-0002">3D-structure</keyword>
<keyword id="KW-0007">Acetylation</keyword>
<keyword id="KW-0025">Alternative splicing</keyword>
<keyword id="KW-0160">Chromosomal rearrangement</keyword>
<keyword id="KW-0175">Coiled coil</keyword>
<keyword id="KW-0225">Disease variant</keyword>
<keyword id="KW-0325">Glycoprotein</keyword>
<keyword id="KW-0945">Host-virus interaction</keyword>
<keyword id="KW-1017">Isopeptide bond</keyword>
<keyword id="KW-0509">mRNA transport</keyword>
<keyword id="KW-0906">Nuclear pore complex</keyword>
<keyword id="KW-0539">Nucleus</keyword>
<keyword id="KW-0597">Phosphoprotein</keyword>
<keyword id="KW-0653">Protein transport</keyword>
<keyword id="KW-1267">Proteomics identification</keyword>
<keyword id="KW-0656">Proto-oncogene</keyword>
<keyword id="KW-1185">Reference proteome</keyword>
<keyword id="KW-0677">Repeat</keyword>
<keyword id="KW-0811">Translocation</keyword>
<keyword id="KW-0813">Transport</keyword>
<keyword id="KW-0832">Ubl conjugation</keyword>
<reference key="1">
    <citation type="journal article" date="1992" name="Mol. Cell. Biol.">
        <title>The translocation (6;9), associated with a specific subtype of acute myeloid leukemia, results in the fusion of two genes, dek and can, and the expression of a chimeric, leukemia-specific dek-can mRNA.</title>
        <authorList>
            <person name="Von Lindern M."/>
            <person name="Fornerod M."/>
            <person name="Van Baal S."/>
            <person name="Jaegle M."/>
            <person name="De Wit T."/>
            <person name="Buijs A."/>
            <person name="Grosveld G."/>
        </authorList>
    </citation>
    <scope>NUCLEOTIDE SEQUENCE [MRNA] (ISOFORM 1)</scope>
    <scope>CHROMOSOMAL TRANSLOCATION WITH DEK</scope>
    <scope>VARIANT SER-574</scope>
    <source>
        <tissue>Testis</tissue>
    </source>
</reference>
<reference key="2">
    <citation type="submission" date="2004-01" db="EMBL/GenBank/DDBJ databases">
        <title>Homo sapiens mRNA for KIAA0023 splice variant 1 protein.</title>
        <authorList>
            <person name="Nagase T."/>
            <person name="Kikuno R."/>
            <person name="Ohara O."/>
        </authorList>
    </citation>
    <scope>NUCLEOTIDE SEQUENCE [MRNA] (ISOFORM 1)</scope>
    <source>
        <tissue>Brain</tissue>
    </source>
</reference>
<reference key="3">
    <citation type="journal article" date="1994" name="DNA Res.">
        <title>Prediction of the coding sequences of unidentified human genes. I. The coding sequences of 40 new genes (KIAA0001-KIAA0040) deduced by analysis of randomly sampled cDNA clones from human immature myeloid cell line KG-1.</title>
        <authorList>
            <person name="Nomura N."/>
            <person name="Miyajima N."/>
            <person name="Sazuka T."/>
            <person name="Tanaka A."/>
            <person name="Kawarabayasi Y."/>
            <person name="Sato S."/>
            <person name="Nagase T."/>
            <person name="Seki N."/>
            <person name="Ishikawa K."/>
            <person name="Tabata S."/>
        </authorList>
    </citation>
    <scope>NUCLEOTIDE SEQUENCE [LARGE SCALE MRNA] (ISOFORM 5)</scope>
</reference>
<reference key="4">
    <citation type="journal article" date="2004" name="Nature">
        <title>DNA sequence and analysis of human chromosome 9.</title>
        <authorList>
            <person name="Humphray S.J."/>
            <person name="Oliver K."/>
            <person name="Hunt A.R."/>
            <person name="Plumb R.W."/>
            <person name="Loveland J.E."/>
            <person name="Howe K.L."/>
            <person name="Andrews T.D."/>
            <person name="Searle S."/>
            <person name="Hunt S.E."/>
            <person name="Scott C.E."/>
            <person name="Jones M.C."/>
            <person name="Ainscough R."/>
            <person name="Almeida J.P."/>
            <person name="Ambrose K.D."/>
            <person name="Ashwell R.I.S."/>
            <person name="Babbage A.K."/>
            <person name="Babbage S."/>
            <person name="Bagguley C.L."/>
            <person name="Bailey J."/>
            <person name="Banerjee R."/>
            <person name="Barker D.J."/>
            <person name="Barlow K.F."/>
            <person name="Bates K."/>
            <person name="Beasley H."/>
            <person name="Beasley O."/>
            <person name="Bird C.P."/>
            <person name="Bray-Allen S."/>
            <person name="Brown A.J."/>
            <person name="Brown J.Y."/>
            <person name="Burford D."/>
            <person name="Burrill W."/>
            <person name="Burton J."/>
            <person name="Carder C."/>
            <person name="Carter N.P."/>
            <person name="Chapman J.C."/>
            <person name="Chen Y."/>
            <person name="Clarke G."/>
            <person name="Clark S.Y."/>
            <person name="Clee C.M."/>
            <person name="Clegg S."/>
            <person name="Collier R.E."/>
            <person name="Corby N."/>
            <person name="Crosier M."/>
            <person name="Cummings A.T."/>
            <person name="Davies J."/>
            <person name="Dhami P."/>
            <person name="Dunn M."/>
            <person name="Dutta I."/>
            <person name="Dyer L.W."/>
            <person name="Earthrowl M.E."/>
            <person name="Faulkner L."/>
            <person name="Fleming C.J."/>
            <person name="Frankish A."/>
            <person name="Frankland J.A."/>
            <person name="French L."/>
            <person name="Fricker D.G."/>
            <person name="Garner P."/>
            <person name="Garnett J."/>
            <person name="Ghori J."/>
            <person name="Gilbert J.G.R."/>
            <person name="Glison C."/>
            <person name="Grafham D.V."/>
            <person name="Gribble S."/>
            <person name="Griffiths C."/>
            <person name="Griffiths-Jones S."/>
            <person name="Grocock R."/>
            <person name="Guy J."/>
            <person name="Hall R.E."/>
            <person name="Hammond S."/>
            <person name="Harley J.L."/>
            <person name="Harrison E.S.I."/>
            <person name="Hart E.A."/>
            <person name="Heath P.D."/>
            <person name="Henderson C.D."/>
            <person name="Hopkins B.L."/>
            <person name="Howard P.J."/>
            <person name="Howden P.J."/>
            <person name="Huckle E."/>
            <person name="Johnson C."/>
            <person name="Johnson D."/>
            <person name="Joy A.A."/>
            <person name="Kay M."/>
            <person name="Keenan S."/>
            <person name="Kershaw J.K."/>
            <person name="Kimberley A.M."/>
            <person name="King A."/>
            <person name="Knights A."/>
            <person name="Laird G.K."/>
            <person name="Langford C."/>
            <person name="Lawlor S."/>
            <person name="Leongamornlert D.A."/>
            <person name="Leversha M."/>
            <person name="Lloyd C."/>
            <person name="Lloyd D.M."/>
            <person name="Lovell J."/>
            <person name="Martin S."/>
            <person name="Mashreghi-Mohammadi M."/>
            <person name="Matthews L."/>
            <person name="McLaren S."/>
            <person name="McLay K.E."/>
            <person name="McMurray A."/>
            <person name="Milne S."/>
            <person name="Nickerson T."/>
            <person name="Nisbett J."/>
            <person name="Nordsiek G."/>
            <person name="Pearce A.V."/>
            <person name="Peck A.I."/>
            <person name="Porter K.M."/>
            <person name="Pandian R."/>
            <person name="Pelan S."/>
            <person name="Phillimore B."/>
            <person name="Povey S."/>
            <person name="Ramsey Y."/>
            <person name="Rand V."/>
            <person name="Scharfe M."/>
            <person name="Sehra H.K."/>
            <person name="Shownkeen R."/>
            <person name="Sims S.K."/>
            <person name="Skuce C.D."/>
            <person name="Smith M."/>
            <person name="Steward C.A."/>
            <person name="Swarbreck D."/>
            <person name="Sycamore N."/>
            <person name="Tester J."/>
            <person name="Thorpe A."/>
            <person name="Tracey A."/>
            <person name="Tromans A."/>
            <person name="Thomas D.W."/>
            <person name="Wall M."/>
            <person name="Wallis J.M."/>
            <person name="West A.P."/>
            <person name="Whitehead S.L."/>
            <person name="Willey D.L."/>
            <person name="Williams S.A."/>
            <person name="Wilming L."/>
            <person name="Wray P.W."/>
            <person name="Young L."/>
            <person name="Ashurst J.L."/>
            <person name="Coulson A."/>
            <person name="Blocker H."/>
            <person name="Durbin R.M."/>
            <person name="Sulston J.E."/>
            <person name="Hubbard T."/>
            <person name="Jackson M.J."/>
            <person name="Bentley D.R."/>
            <person name="Beck S."/>
            <person name="Rogers J."/>
            <person name="Dunham I."/>
        </authorList>
    </citation>
    <scope>NUCLEOTIDE SEQUENCE [LARGE SCALE GENOMIC DNA]</scope>
</reference>
<reference key="5">
    <citation type="journal article" date="2004" name="Genome Res.">
        <title>The status, quality, and expansion of the NIH full-length cDNA project: the Mammalian Gene Collection (MGC).</title>
        <authorList>
            <consortium name="The MGC Project Team"/>
        </authorList>
    </citation>
    <scope>NUCLEOTIDE SEQUENCE [LARGE SCALE MRNA] (ISOFORMS 1 AND 4)</scope>
    <scope>VARIANT SER-574</scope>
    <source>
        <tissue>Placenta</tissue>
        <tissue>Testis</tissue>
    </source>
</reference>
<reference key="6">
    <citation type="journal article" date="1992" name="Mol. Cell. Biol.">
        <title>Can, a putative oncogene associated with myeloid leukemogenesis, may be activated by fusion of its 3' half to different genes: characterization of the set gene.</title>
        <authorList>
            <person name="von Lindern M."/>
            <person name="van Baal S."/>
            <person name="Wiegant J."/>
            <person name="Raap A."/>
            <person name="Hagemeijer A."/>
            <person name="Grosveld G."/>
        </authorList>
    </citation>
    <scope>CHROMOSOMAL TRANSLOCATION WITH SET</scope>
</reference>
<reference key="7">
    <citation type="journal article" date="1994" name="Proc. Natl. Acad. Sci. U.S.A.">
        <title>The human CAN protein, a putative oncogene product associated with myeloid leukemogenesis, is a nuclear pore complex protein that faces the cytoplasm.</title>
        <authorList>
            <person name="Kraemer D."/>
            <person name="Wozniak R.W."/>
            <person name="Blobel G."/>
            <person name="Radu A."/>
        </authorList>
    </citation>
    <scope>FUNCTION</scope>
    <scope>SUBCELLULAR LOCATION</scope>
</reference>
<reference key="8">
    <citation type="journal article" date="1997" name="EMBO J.">
        <title>The human homologue of yeast CRM1 is in a dynamic subcomplex with CAN/Nup214 and the novel nuclear pore component Nup88.</title>
        <authorList>
            <person name="Fornerod M."/>
            <person name="van Deursen J.M."/>
            <person name="van Baal S."/>
            <person name="Reynolds A."/>
            <person name="Davis D."/>
            <person name="Murti K.G."/>
            <person name="Fransen J."/>
            <person name="Grosveld G."/>
        </authorList>
    </citation>
    <scope>FUNCTION</scope>
    <scope>IDENTIFICATION IN THE NUCLEAR PORE COMPLEX</scope>
    <scope>INTERACTION WITH NUP88 AND XPO1</scope>
</reference>
<reference key="9">
    <citation type="journal article" date="2002" name="J. Cell Biol.">
        <title>Exportin-5, a novel karyopherin, mediates nuclear export of double-stranded RNA binding proteins.</title>
        <authorList>
            <person name="Brownawell A.M."/>
            <person name="Macara I.G."/>
        </authorList>
    </citation>
    <scope>INTERACTION WITH XPO5</scope>
</reference>
<reference key="10">
    <citation type="journal article" date="2004" name="Biochem. Biophys. Res. Commun.">
        <title>Direct association of tristetraprolin with the nucleoporin CAN/Nup214.</title>
        <authorList>
            <person name="Carman J.A."/>
            <person name="Nadler S.G."/>
        </authorList>
    </citation>
    <scope>INTERACTION WITH ZFP36</scope>
</reference>
<reference key="11">
    <citation type="journal article" date="2006" name="Cell">
        <title>Global, in vivo, and site-specific phosphorylation dynamics in signaling networks.</title>
        <authorList>
            <person name="Olsen J.V."/>
            <person name="Blagoev B."/>
            <person name="Gnad F."/>
            <person name="Macek B."/>
            <person name="Kumar C."/>
            <person name="Mortensen P."/>
            <person name="Mann M."/>
        </authorList>
    </citation>
    <scope>IDENTIFICATION BY MASS SPECTROMETRY [LARGE SCALE ANALYSIS]</scope>
    <source>
        <tissue>Cervix carcinoma</tissue>
    </source>
</reference>
<reference key="12">
    <citation type="journal article" date="2006" name="Nat. Biotechnol.">
        <title>A probability-based approach for high-throughput protein phosphorylation analysis and site localization.</title>
        <authorList>
            <person name="Beausoleil S.A."/>
            <person name="Villen J."/>
            <person name="Gerber S.A."/>
            <person name="Rush J."/>
            <person name="Gygi S.P."/>
        </authorList>
    </citation>
    <scope>PHOSPHORYLATION [LARGE SCALE ANALYSIS] AT SER-430 AND THR-439</scope>
    <scope>IDENTIFICATION BY MASS SPECTROMETRY [LARGE SCALE ANALYSIS]</scope>
    <source>
        <tissue>Cervix carcinoma</tissue>
    </source>
</reference>
<reference key="13">
    <citation type="journal article" date="2007" name="J. Proteome Res.">
        <title>Improved titanium dioxide enrichment of phosphopeptides from HeLa cells and high confident phosphopeptide identification by cross-validation of MS/MS and MS/MS/MS spectra.</title>
        <authorList>
            <person name="Yu L.R."/>
            <person name="Zhu Z."/>
            <person name="Chan K.C."/>
            <person name="Issaq H.J."/>
            <person name="Dimitrov D.S."/>
            <person name="Veenstra T.D."/>
        </authorList>
    </citation>
    <scope>IDENTIFICATION BY MASS SPECTROMETRY [LARGE SCALE ANALYSIS]</scope>
    <source>
        <tissue>Cervix carcinoma</tissue>
    </source>
</reference>
<reference key="14">
    <citation type="journal article" date="2008" name="Mol. Cell">
        <title>Kinase-selective enrichment enables quantitative phosphoproteomics of the kinome across the cell cycle.</title>
        <authorList>
            <person name="Daub H."/>
            <person name="Olsen J.V."/>
            <person name="Bairlein M."/>
            <person name="Gnad F."/>
            <person name="Oppermann F.S."/>
            <person name="Korner R."/>
            <person name="Greff Z."/>
            <person name="Keri G."/>
            <person name="Stemmann O."/>
            <person name="Mann M."/>
        </authorList>
    </citation>
    <scope>PHOSPHORYLATION [LARGE SCALE ANALYSIS] AT SER-651; SER-940 AND SER-1181</scope>
    <scope>IDENTIFICATION BY MASS SPECTROMETRY [LARGE SCALE ANALYSIS]</scope>
    <source>
        <tissue>Cervix carcinoma</tissue>
    </source>
</reference>
<reference key="15">
    <citation type="journal article" date="2008" name="Proc. Natl. Acad. Sci. U.S.A.">
        <title>A quantitative atlas of mitotic phosphorylation.</title>
        <authorList>
            <person name="Dephoure N."/>
            <person name="Zhou C."/>
            <person name="Villen J."/>
            <person name="Beausoleil S.A."/>
            <person name="Bakalarski C.E."/>
            <person name="Elledge S.J."/>
            <person name="Gygi S.P."/>
        </authorList>
    </citation>
    <scope>PHOSPHORYLATION [LARGE SCALE ANALYSIS] AT SER-430; THR-434; THR-437; THR-439; SER-666; SER-970; SER-974; SER-1023 AND SER-1963</scope>
    <scope>IDENTIFICATION BY MASS SPECTROMETRY [LARGE SCALE ANALYSIS]</scope>
    <source>
        <tissue>Cervix carcinoma</tissue>
    </source>
</reference>
<reference key="16">
    <citation type="journal article" date="2009" name="Anal. Chem.">
        <title>Lys-N and trypsin cover complementary parts of the phosphoproteome in a refined SCX-based approach.</title>
        <authorList>
            <person name="Gauci S."/>
            <person name="Helbig A.O."/>
            <person name="Slijper M."/>
            <person name="Krijgsveld J."/>
            <person name="Heck A.J."/>
            <person name="Mohammed S."/>
        </authorList>
    </citation>
    <scope>IDENTIFICATION BY MASS SPECTROMETRY [LARGE SCALE ANALYSIS]</scope>
</reference>
<reference key="17">
    <citation type="journal article" date="2009" name="J. Virol.">
        <title>Herpesvirus capsid association with the nuclear pore complex and viral DNA release involve the nucleoporin CAN/Nup214 and the capsid protein pUL25.</title>
        <authorList>
            <person name="Pasdeloup D."/>
            <person name="Blondel D."/>
            <person name="Isidro A.L."/>
            <person name="Rixon F.J."/>
        </authorList>
    </citation>
    <scope>INTERACTION WITH HHV-1 PROTEIN UL25 (MICROBIAL INFECTION)</scope>
</reference>
<reference key="18">
    <citation type="journal article" date="2009" name="Sci. Signal.">
        <title>Quantitative phosphoproteomic analysis of T cell receptor signaling reveals system-wide modulation of protein-protein interactions.</title>
        <authorList>
            <person name="Mayya V."/>
            <person name="Lundgren D.H."/>
            <person name="Hwang S.-I."/>
            <person name="Rezaul K."/>
            <person name="Wu L."/>
            <person name="Eng J.K."/>
            <person name="Rodionov V."/>
            <person name="Han D.K."/>
        </authorList>
    </citation>
    <scope>PHOSPHORYLATION [LARGE SCALE ANALYSIS] AT SER-430 AND SER-989</scope>
    <scope>IDENTIFICATION BY MASS SPECTROMETRY [LARGE SCALE ANALYSIS]</scope>
    <source>
        <tissue>Leukemic T-cell</tissue>
    </source>
</reference>
<reference key="19">
    <citation type="journal article" date="2010" name="Sci. Signal.">
        <title>Quantitative phosphoproteomics reveals widespread full phosphorylation site occupancy during mitosis.</title>
        <authorList>
            <person name="Olsen J.V."/>
            <person name="Vermeulen M."/>
            <person name="Santamaria A."/>
            <person name="Kumar C."/>
            <person name="Miller M.L."/>
            <person name="Jensen L.J."/>
            <person name="Gnad F."/>
            <person name="Cox J."/>
            <person name="Jensen T.S."/>
            <person name="Nigg E.A."/>
            <person name="Brunak S."/>
            <person name="Mann M."/>
        </authorList>
    </citation>
    <scope>PHOSPHORYLATION [LARGE SCALE ANALYSIS] AT SER-657; THR-670; SER-678; SER-940; SER-1045; SER-1081; THR-1134; THR-1150; THR-1156; THR-1312 AND SER-1985</scope>
    <scope>IDENTIFICATION BY MASS SPECTROMETRY [LARGE SCALE ANALYSIS]</scope>
    <source>
        <tissue>Cervix carcinoma</tissue>
    </source>
</reference>
<reference key="20">
    <citation type="journal article" date="2011" name="BMC Syst. Biol.">
        <title>Initial characterization of the human central proteome.</title>
        <authorList>
            <person name="Burkard T.R."/>
            <person name="Planyavsky M."/>
            <person name="Kaupe I."/>
            <person name="Breitwieser F.P."/>
            <person name="Buerckstuemmer T."/>
            <person name="Bennett K.L."/>
            <person name="Superti-Furga G."/>
            <person name="Colinge J."/>
        </authorList>
    </citation>
    <scope>IDENTIFICATION BY MASS SPECTROMETRY [LARGE SCALE ANALYSIS]</scope>
</reference>
<reference key="21">
    <citation type="journal article" date="2011" name="Sci. Signal.">
        <title>System-wide temporal characterization of the proteome and phosphoproteome of human embryonic stem cell differentiation.</title>
        <authorList>
            <person name="Rigbolt K.T."/>
            <person name="Prokhorova T.A."/>
            <person name="Akimov V."/>
            <person name="Henningsen J."/>
            <person name="Johansen P.T."/>
            <person name="Kratchmarova I."/>
            <person name="Kassem M."/>
            <person name="Mann M."/>
            <person name="Olsen J.V."/>
            <person name="Blagoev B."/>
        </authorList>
    </citation>
    <scope>PHOSPHORYLATION [LARGE SCALE ANALYSIS] AT SER-433; THR-434; THR-437; SER-657; THR-670; SER-678 AND SER-940</scope>
    <scope>IDENTIFICATION BY MASS SPECTROMETRY [LARGE SCALE ANALYSIS]</scope>
</reference>
<reference key="22">
    <citation type="journal article" date="2012" name="Mol. Cell. Proteomics">
        <title>Comparative large-scale characterisation of plant vs. mammal proteins reveals similar and idiosyncratic N-alpha acetylation features.</title>
        <authorList>
            <person name="Bienvenut W.V."/>
            <person name="Sumpton D."/>
            <person name="Martinez A."/>
            <person name="Lilla S."/>
            <person name="Espagne C."/>
            <person name="Meinnel T."/>
            <person name="Giglione C."/>
        </authorList>
    </citation>
    <scope>ACETYLATION [LARGE SCALE ANALYSIS] AT GLY-2</scope>
    <scope>CLEAVAGE OF INITIATOR METHIONINE [LARGE SCALE ANALYSIS]</scope>
    <scope>IDENTIFICATION BY MASS SPECTROMETRY [LARGE SCALE ANALYSIS]</scope>
</reference>
<reference key="23">
    <citation type="journal article" date="2013" name="J. Proteome Res.">
        <title>Toward a comprehensive characterization of a human cancer cell phosphoproteome.</title>
        <authorList>
            <person name="Zhou H."/>
            <person name="Di Palma S."/>
            <person name="Preisinger C."/>
            <person name="Peng M."/>
            <person name="Polat A.N."/>
            <person name="Heck A.J."/>
            <person name="Mohammed S."/>
        </authorList>
    </citation>
    <scope>PHOSPHORYLATION [LARGE SCALE ANALYSIS] AT SER-30; THR-416; SER-421; SER-430; SER-433; THR-434; THR-437; SER-651; SER-657; SER-666; THR-670; SER-678; SER-760; SER-940; THR-1021; SER-1023; SER-1045; SER-1056; SER-1081; THR-1156 AND SER-1353</scope>
    <scope>IDENTIFICATION BY MASS SPECTROMETRY [LARGE SCALE ANALYSIS]</scope>
    <source>
        <tissue>Cervix carcinoma</tissue>
        <tissue>Erythroleukemia</tissue>
    </source>
</reference>
<reference key="24">
    <citation type="journal article" date="2014" name="J. Proteomics">
        <title>An enzyme assisted RP-RPLC approach for in-depth analysis of human liver phosphoproteome.</title>
        <authorList>
            <person name="Bian Y."/>
            <person name="Song C."/>
            <person name="Cheng K."/>
            <person name="Dong M."/>
            <person name="Wang F."/>
            <person name="Huang J."/>
            <person name="Sun D."/>
            <person name="Wang L."/>
            <person name="Ye M."/>
            <person name="Zou H."/>
        </authorList>
    </citation>
    <scope>PHOSPHORYLATION [LARGE SCALE ANALYSIS] AT SER-430; SER-433 AND SER-678</scope>
    <scope>IDENTIFICATION BY MASS SPECTROMETRY [LARGE SCALE ANALYSIS]</scope>
    <source>
        <tissue>Liver</tissue>
    </source>
</reference>
<reference key="25">
    <citation type="journal article" date="2015" name="J. Virol.">
        <title>Nuclear import of adenovirus DNA involves direct interaction of hexon with an N-terminal domain of the nucleoporin Nup214.</title>
        <authorList>
            <person name="Cassany A."/>
            <person name="Ragues J."/>
            <person name="Guan T."/>
            <person name="Begu D."/>
            <person name="Wodrich H."/>
            <person name="Kann M."/>
            <person name="Nemerow G.R."/>
            <person name="Gerace L."/>
        </authorList>
    </citation>
    <scope>FUNCTION (MICROBIAL INFECTION)</scope>
    <scope>INTERACTION WITH HADV-5 PROTEIN L3</scope>
    <scope>REGION</scope>
</reference>
<reference key="26">
    <citation type="journal article" date="2017" name="Nat. Struct. Mol. Biol.">
        <title>Site-specific mapping of the human SUMO proteome reveals co-modification with phosphorylation.</title>
        <authorList>
            <person name="Hendriks I.A."/>
            <person name="Lyon D."/>
            <person name="Young C."/>
            <person name="Jensen L.J."/>
            <person name="Vertegaal A.C."/>
            <person name="Nielsen M.L."/>
        </authorList>
    </citation>
    <scope>SUMOYLATION [LARGE SCALE ANALYSIS] AT LYS-1538</scope>
    <scope>IDENTIFICATION BY MASS SPECTROMETRY [LARGE SCALE ANALYSIS]</scope>
</reference>
<reference key="27">
    <citation type="journal article" date="2018" name="PLoS Genet.">
        <title>Biallelic mutations in nucleoporin NUP88 cause lethal fetal akinesia deformation sequence.</title>
        <authorList>
            <person name="Bonnin E."/>
            <person name="Cabochette P."/>
            <person name="Filosa A."/>
            <person name="Juehlen R."/>
            <person name="Komatsuzaki S."/>
            <person name="Hezwani M."/>
            <person name="Dickmanns A."/>
            <person name="Martinelli V."/>
            <person name="Vermeersch M."/>
            <person name="Supply L."/>
            <person name="Martins N."/>
            <person name="Pirenne L."/>
            <person name="Ravenscroft G."/>
            <person name="Lombard M."/>
            <person name="Port S."/>
            <person name="Spillner C."/>
            <person name="Janssens S."/>
            <person name="Roets E."/>
            <person name="Van Dorpe J."/>
            <person name="Lammens M."/>
            <person name="Kehlenbach R.H."/>
            <person name="Ficner R."/>
            <person name="Laing N.G."/>
            <person name="Hoffmann K."/>
            <person name="Vanhollebeke B."/>
            <person name="Fahrenkrog B."/>
        </authorList>
    </citation>
    <scope>INTERACTION WITH NUP88</scope>
</reference>
<reference key="28">
    <citation type="journal article" date="2019" name="Am. J. Hum. Genet.">
        <title>Pathogenic variants in NUP214 cause 'plugged' nuclear pore channels and acute febrile encephalopathy.</title>
        <authorList>
            <person name="Fichtman B."/>
            <person name="Harel T."/>
            <person name="Biran N."/>
            <person name="Zagairy F."/>
            <person name="Applegate C.D."/>
            <person name="Salzberg Y."/>
            <person name="Gilboa T."/>
            <person name="Salah S."/>
            <person name="Shaag A."/>
            <person name="Simanovsky N."/>
            <person name="Ayoubieh H."/>
            <person name="Sobreira N."/>
            <person name="Punzi G."/>
            <person name="Pierri C.L."/>
            <person name="Hamosh A."/>
            <person name="Elpeleg O."/>
            <person name="Harel A."/>
            <person name="Edvardson S."/>
        </authorList>
    </citation>
    <scope>FUNCTION</scope>
    <scope>INVOLVEMENT IN IIAE9</scope>
    <scope>VARIANTS IIAE9 CYS-38 AND SER-387</scope>
    <scope>CHARACTERIZATION OF VARIANT IIAE9 CYS-38</scope>
</reference>
<reference key="29">
    <citation type="journal article" date="2007" name="Proc. Natl. Acad. Sci. U.S.A.">
        <title>Crystal structure of the N-terminal domain of the human protooncogene Nup214/CAN.</title>
        <authorList>
            <person name="Napetschnig J."/>
            <person name="Blobel G."/>
            <person name="Hoelz A."/>
        </authorList>
    </citation>
    <scope>X-RAY CRYSTALLOGRAPHY (1.65 ANGSTROMS) OF 1-434</scope>
    <scope>BETA-PROPELLER DOMAIN</scope>
</reference>
<reference key="30">
    <citation type="journal article" date="2009" name="Nat. Struct. Mol. Biol.">
        <title>The mRNA export protein DBP5 binds RNA and the cytoplasmic nucleoporin NUP214 in a mutually exclusive manner.</title>
        <authorList>
            <person name="von Moeller H."/>
            <person name="Basquin C."/>
            <person name="Conti E."/>
        </authorList>
    </citation>
    <scope>X-RAY CRYSTALLOGRAPHY (2.8 ANGSTROMS) OF 1-405 IN COMPLEX WITH DDX19B</scope>
    <scope>MUTAGENESIS OF VAL-353 AND ASP-359</scope>
</reference>
<reference key="31">
    <citation type="journal article" date="2009" name="Proc. Natl. Acad. Sci. U.S.A.">
        <title>Structural and functional analysis of the interaction between the nucleoporin Nup214 and the DEAD-box helicase Ddx19.</title>
        <authorList>
            <person name="Napetschnig J."/>
            <person name="Kassube S.A."/>
            <person name="Debler E.W."/>
            <person name="Wong R.W."/>
            <person name="Blobel G."/>
            <person name="Hoelz A."/>
        </authorList>
    </citation>
    <scope>X-RAY CRYSTALLOGRAPHY (2.51 ANGSTROMS) OF 1-450 IN COMPLEX WITH DDX19B</scope>
    <scope>COILED-COIL DOMAIN</scope>
</reference>
<reference key="32">
    <citation type="journal article" date="2004" name="Nat. Genet.">
        <title>Fusion of NUP214 to ABL1 on amplified episomes in T-cell acute lymphoblastic leukemia.</title>
        <authorList>
            <person name="Graux C."/>
            <person name="Cools J."/>
            <person name="Melotte C."/>
            <person name="Quentmeier H."/>
            <person name="Ferrando A."/>
            <person name="Levine R."/>
            <person name="Vermeesch J.R."/>
            <person name="Stul M."/>
            <person name="Dutta B."/>
            <person name="Boeckx N."/>
            <person name="Bosly A."/>
            <person name="Heimann P."/>
            <person name="Uyttebroeck A."/>
            <person name="Mentens N."/>
            <person name="Somers R."/>
            <person name="MacLeod R.A."/>
            <person name="Drexler H.G."/>
            <person name="Look A.T."/>
            <person name="Gilliland D.G."/>
            <person name="Michaux L."/>
            <person name="Vandenberghe P."/>
            <person name="Wlodarska I."/>
            <person name="Marynen P."/>
            <person name="Hagemeijer A."/>
        </authorList>
    </citation>
    <scope>DISEASE</scope>
    <scope>CHROMOSOMAL TRANSLOCATION WITH ABL1</scope>
</reference>
<reference key="33">
    <citation type="journal article" date="2006" name="Science">
        <title>The consensus coding sequences of human breast and colorectal cancers.</title>
        <authorList>
            <person name="Sjoeblom T."/>
            <person name="Jones S."/>
            <person name="Wood L.D."/>
            <person name="Parsons D.W."/>
            <person name="Lin J."/>
            <person name="Barber T.D."/>
            <person name="Mandelker D."/>
            <person name="Leary R.J."/>
            <person name="Ptak J."/>
            <person name="Silliman N."/>
            <person name="Szabo S."/>
            <person name="Buckhaults P."/>
            <person name="Farrell C."/>
            <person name="Meeh P."/>
            <person name="Markowitz S.D."/>
            <person name="Willis J."/>
            <person name="Dawson D."/>
            <person name="Willson J.K.V."/>
            <person name="Gazdar A.F."/>
            <person name="Hartigan J."/>
            <person name="Wu L."/>
            <person name="Liu C."/>
            <person name="Parmigiani G."/>
            <person name="Park B.H."/>
            <person name="Bachman K.E."/>
            <person name="Papadopoulos N."/>
            <person name="Vogelstein B."/>
            <person name="Kinzler K.W."/>
            <person name="Velculescu V.E."/>
        </authorList>
    </citation>
    <scope>VARIANTS [LARGE SCALE ANALYSIS] ALA-424; LEU-1378 AND VAL-1392</scope>
</reference>
<reference key="34">
    <citation type="journal article" date="2010" name="Haematologica">
        <title>SQSTM1-NUP214: a new gene fusion in adult T-cell acute lymphoblastic leukemia.</title>
        <authorList>
            <person name="Gorello P."/>
            <person name="La Starza R."/>
            <person name="Di Giacomo D."/>
            <person name="Messina M."/>
            <person name="Puzzolo M.C."/>
            <person name="Crescenzi B."/>
            <person name="Santoro A."/>
            <person name="Chiaretti S."/>
            <person name="Mecucci C."/>
        </authorList>
    </citation>
    <scope>DISEASE</scope>
    <scope>CHROMOSOMAL TRANSLOCATION WITH SQSTM1</scope>
</reference>
<reference key="35">
    <citation type="journal article" date="2019" name="Hum. Genet.">
        <title>NUP214 deficiency causes severe encephalopathy and microcephaly in humans.</title>
        <authorList>
            <person name="Shamseldin H.E."/>
            <person name="Makhseed N."/>
            <person name="Ibrahim N."/>
            <person name="Al-Sheddi T."/>
            <person name="Alobeid E."/>
            <person name="Abdulwahab F."/>
            <person name="Alkuraya F.S."/>
        </authorList>
    </citation>
    <scope>VARIANT IIAE9 GLY-154</scope>
    <scope>INVOLVEMENT IN IIAE9</scope>
</reference>